<proteinExistence type="inferred from homology"/>
<feature type="chain" id="PRO_1000058550" description="Polyamine aminopropyltransferase">
    <location>
        <begin position="1"/>
        <end position="288"/>
    </location>
</feature>
<feature type="domain" description="PABS" evidence="1">
    <location>
        <begin position="9"/>
        <end position="238"/>
    </location>
</feature>
<feature type="active site" description="Proton acceptor" evidence="1">
    <location>
        <position position="158"/>
    </location>
</feature>
<feature type="binding site" evidence="1">
    <location>
        <position position="33"/>
    </location>
    <ligand>
        <name>S-methyl-5'-thioadenosine</name>
        <dbReference type="ChEBI" id="CHEBI:17509"/>
    </ligand>
</feature>
<feature type="binding site" evidence="1">
    <location>
        <position position="64"/>
    </location>
    <ligand>
        <name>spermidine</name>
        <dbReference type="ChEBI" id="CHEBI:57834"/>
    </ligand>
</feature>
<feature type="binding site" evidence="1">
    <location>
        <position position="88"/>
    </location>
    <ligand>
        <name>spermidine</name>
        <dbReference type="ChEBI" id="CHEBI:57834"/>
    </ligand>
</feature>
<feature type="binding site" evidence="1">
    <location>
        <position position="108"/>
    </location>
    <ligand>
        <name>S-methyl-5'-thioadenosine</name>
        <dbReference type="ChEBI" id="CHEBI:17509"/>
    </ligand>
</feature>
<feature type="binding site" evidence="1">
    <location>
        <begin position="140"/>
        <end position="141"/>
    </location>
    <ligand>
        <name>S-methyl-5'-thioadenosine</name>
        <dbReference type="ChEBI" id="CHEBI:17509"/>
    </ligand>
</feature>
<feature type="binding site" evidence="1">
    <location>
        <begin position="158"/>
        <end position="161"/>
    </location>
    <ligand>
        <name>spermidine</name>
        <dbReference type="ChEBI" id="CHEBI:57834"/>
    </ligand>
</feature>
<feature type="binding site" evidence="1">
    <location>
        <position position="165"/>
    </location>
    <ligand>
        <name>S-methyl-5'-thioadenosine</name>
        <dbReference type="ChEBI" id="CHEBI:17509"/>
    </ligand>
</feature>
<keyword id="KW-0963">Cytoplasm</keyword>
<keyword id="KW-0620">Polyamine biosynthesis</keyword>
<keyword id="KW-1185">Reference proteome</keyword>
<keyword id="KW-0745">Spermidine biosynthesis</keyword>
<keyword id="KW-0808">Transferase</keyword>
<comment type="function">
    <text evidence="1">Catalyzes the irreversible transfer of a propylamine group from the amino donor S-adenosylmethioninamine (decarboxy-AdoMet) to putrescine (1,4-diaminobutane) to yield spermidine.</text>
</comment>
<comment type="catalytic activity">
    <reaction evidence="1">
        <text>S-adenosyl 3-(methylsulfanyl)propylamine + putrescine = S-methyl-5'-thioadenosine + spermidine + H(+)</text>
        <dbReference type="Rhea" id="RHEA:12721"/>
        <dbReference type="ChEBI" id="CHEBI:15378"/>
        <dbReference type="ChEBI" id="CHEBI:17509"/>
        <dbReference type="ChEBI" id="CHEBI:57443"/>
        <dbReference type="ChEBI" id="CHEBI:57834"/>
        <dbReference type="ChEBI" id="CHEBI:326268"/>
        <dbReference type="EC" id="2.5.1.16"/>
    </reaction>
</comment>
<comment type="pathway">
    <text evidence="1">Amine and polyamine biosynthesis; spermidine biosynthesis; spermidine from putrescine: step 1/1.</text>
</comment>
<comment type="subunit">
    <text evidence="1">Homodimer or homotetramer.</text>
</comment>
<comment type="subcellular location">
    <subcellularLocation>
        <location evidence="1">Cytoplasm</location>
    </subcellularLocation>
</comment>
<comment type="similarity">
    <text evidence="1">Belongs to the spermidine/spermine synthase family.</text>
</comment>
<protein>
    <recommendedName>
        <fullName evidence="1">Polyamine aminopropyltransferase</fullName>
    </recommendedName>
    <alternativeName>
        <fullName evidence="1">Putrescine aminopropyltransferase</fullName>
        <shortName evidence="1">PAPT</shortName>
    </alternativeName>
    <alternativeName>
        <fullName evidence="1">Spermidine synthase</fullName>
        <shortName evidence="1">SPDS</shortName>
        <shortName evidence="1">SPDSY</shortName>
        <ecNumber evidence="1">2.5.1.16</ecNumber>
    </alternativeName>
</protein>
<gene>
    <name evidence="1" type="primary">speE</name>
    <name type="ordered locus">EcE24377A_0123</name>
</gene>
<sequence length="288" mass="32321">MAEKKQWHETLHDQFGQYFAVDNVLYHEKTDHQDLIIFENAAFGRVMALDGVVQTTERDEFIYHEMMTHVPLLAHGHAKHVLIIGGGDGAMLREVTRHKNVESITMVEIDAGVVSFCRQYLPNHNAGSYDDPRFKLVIDDGVNFVNQTSQTFDVIISDCTDPIGPGESLFTSAFYEGCKRCLNPGGIFVAQNGVCFLQQEEAIDSHRKLSHYFSDVGFYQAAIPTYYGGIMTFAWATDNDALRHLSTEIIQARFLASGLKCRYYNPAIHTAAFALPQYLQDALASQPS</sequence>
<reference key="1">
    <citation type="journal article" date="2008" name="J. Bacteriol.">
        <title>The pangenome structure of Escherichia coli: comparative genomic analysis of E. coli commensal and pathogenic isolates.</title>
        <authorList>
            <person name="Rasko D.A."/>
            <person name="Rosovitz M.J."/>
            <person name="Myers G.S.A."/>
            <person name="Mongodin E.F."/>
            <person name="Fricke W.F."/>
            <person name="Gajer P."/>
            <person name="Crabtree J."/>
            <person name="Sebaihia M."/>
            <person name="Thomson N.R."/>
            <person name="Chaudhuri R."/>
            <person name="Henderson I.R."/>
            <person name="Sperandio V."/>
            <person name="Ravel J."/>
        </authorList>
    </citation>
    <scope>NUCLEOTIDE SEQUENCE [LARGE SCALE GENOMIC DNA]</scope>
    <source>
        <strain>E24377A / ETEC</strain>
    </source>
</reference>
<evidence type="ECO:0000255" key="1">
    <source>
        <dbReference type="HAMAP-Rule" id="MF_00198"/>
    </source>
</evidence>
<organism>
    <name type="scientific">Escherichia coli O139:H28 (strain E24377A / ETEC)</name>
    <dbReference type="NCBI Taxonomy" id="331111"/>
    <lineage>
        <taxon>Bacteria</taxon>
        <taxon>Pseudomonadati</taxon>
        <taxon>Pseudomonadota</taxon>
        <taxon>Gammaproteobacteria</taxon>
        <taxon>Enterobacterales</taxon>
        <taxon>Enterobacteriaceae</taxon>
        <taxon>Escherichia</taxon>
    </lineage>
</organism>
<dbReference type="EC" id="2.5.1.16" evidence="1"/>
<dbReference type="EMBL" id="CP000800">
    <property type="protein sequence ID" value="ABV21061.1"/>
    <property type="molecule type" value="Genomic_DNA"/>
</dbReference>
<dbReference type="RefSeq" id="WP_000818411.1">
    <property type="nucleotide sequence ID" value="NC_009801.1"/>
</dbReference>
<dbReference type="SMR" id="A7ZHL0"/>
<dbReference type="GeneID" id="75202064"/>
<dbReference type="KEGG" id="ecw:EcE24377A_0123"/>
<dbReference type="HOGENOM" id="CLU_048199_0_0_6"/>
<dbReference type="UniPathway" id="UPA00248">
    <property type="reaction ID" value="UER00314"/>
</dbReference>
<dbReference type="Proteomes" id="UP000001122">
    <property type="component" value="Chromosome"/>
</dbReference>
<dbReference type="GO" id="GO:0005829">
    <property type="term" value="C:cytosol"/>
    <property type="evidence" value="ECO:0007669"/>
    <property type="project" value="TreeGrafter"/>
</dbReference>
<dbReference type="GO" id="GO:0004766">
    <property type="term" value="F:spermidine synthase activity"/>
    <property type="evidence" value="ECO:0007669"/>
    <property type="project" value="UniProtKB-UniRule"/>
</dbReference>
<dbReference type="GO" id="GO:0008295">
    <property type="term" value="P:spermidine biosynthetic process"/>
    <property type="evidence" value="ECO:0007669"/>
    <property type="project" value="UniProtKB-UniRule"/>
</dbReference>
<dbReference type="CDD" id="cd02440">
    <property type="entry name" value="AdoMet_MTases"/>
    <property type="match status" value="1"/>
</dbReference>
<dbReference type="FunFam" id="2.30.140.10:FF:000002">
    <property type="entry name" value="Polyamine aminopropyltransferase"/>
    <property type="match status" value="1"/>
</dbReference>
<dbReference type="FunFam" id="3.40.50.150:FF:000026">
    <property type="entry name" value="Polyamine aminopropyltransferase"/>
    <property type="match status" value="1"/>
</dbReference>
<dbReference type="Gene3D" id="2.30.140.10">
    <property type="entry name" value="Spermidine synthase, tetramerisation domain"/>
    <property type="match status" value="1"/>
</dbReference>
<dbReference type="Gene3D" id="3.40.50.150">
    <property type="entry name" value="Vaccinia Virus protein VP39"/>
    <property type="match status" value="1"/>
</dbReference>
<dbReference type="HAMAP" id="MF_00198">
    <property type="entry name" value="Spermidine_synth"/>
    <property type="match status" value="1"/>
</dbReference>
<dbReference type="InterPro" id="IPR030374">
    <property type="entry name" value="PABS"/>
</dbReference>
<dbReference type="InterPro" id="IPR030373">
    <property type="entry name" value="PABS_CS"/>
</dbReference>
<dbReference type="InterPro" id="IPR029063">
    <property type="entry name" value="SAM-dependent_MTases_sf"/>
</dbReference>
<dbReference type="InterPro" id="IPR001045">
    <property type="entry name" value="Spermi_synthase"/>
</dbReference>
<dbReference type="InterPro" id="IPR035246">
    <property type="entry name" value="Spermidine_synt_N"/>
</dbReference>
<dbReference type="InterPro" id="IPR037163">
    <property type="entry name" value="Spermidine_synt_N_sf"/>
</dbReference>
<dbReference type="NCBIfam" id="NF037959">
    <property type="entry name" value="MFS_SpdSyn"/>
    <property type="match status" value="1"/>
</dbReference>
<dbReference type="NCBIfam" id="NF002010">
    <property type="entry name" value="PRK00811.1"/>
    <property type="match status" value="1"/>
</dbReference>
<dbReference type="NCBIfam" id="TIGR00417">
    <property type="entry name" value="speE"/>
    <property type="match status" value="1"/>
</dbReference>
<dbReference type="PANTHER" id="PTHR11558:SF11">
    <property type="entry name" value="SPERMIDINE SYNTHASE"/>
    <property type="match status" value="1"/>
</dbReference>
<dbReference type="PANTHER" id="PTHR11558">
    <property type="entry name" value="SPERMIDINE/SPERMINE SYNTHASE"/>
    <property type="match status" value="1"/>
</dbReference>
<dbReference type="Pfam" id="PF17284">
    <property type="entry name" value="Spermine_synt_N"/>
    <property type="match status" value="1"/>
</dbReference>
<dbReference type="Pfam" id="PF01564">
    <property type="entry name" value="Spermine_synth"/>
    <property type="match status" value="1"/>
</dbReference>
<dbReference type="SUPFAM" id="SSF53335">
    <property type="entry name" value="S-adenosyl-L-methionine-dependent methyltransferases"/>
    <property type="match status" value="1"/>
</dbReference>
<dbReference type="PROSITE" id="PS01330">
    <property type="entry name" value="PABS_1"/>
    <property type="match status" value="1"/>
</dbReference>
<dbReference type="PROSITE" id="PS51006">
    <property type="entry name" value="PABS_2"/>
    <property type="match status" value="1"/>
</dbReference>
<accession>A7ZHL0</accession>
<name>SPEE_ECO24</name>